<protein>
    <recommendedName>
        <fullName>Zinc phosphodiesterase ELAC protein 1</fullName>
        <ecNumber evidence="2">3.1.26.11</ecNumber>
    </recommendedName>
    <alternativeName>
        <fullName>ElaC homolog protein 1</fullName>
    </alternativeName>
    <alternativeName>
        <fullName>Ribonuclease Z 1</fullName>
        <shortName>RNase Z 1</shortName>
    </alternativeName>
    <alternativeName>
        <fullName>tRNA 3 endonuclease 1</fullName>
    </alternativeName>
    <alternativeName>
        <fullName>tRNase Z 1</fullName>
    </alternativeName>
</protein>
<evidence type="ECO:0000250" key="1">
    <source>
        <dbReference type="UniProtKB" id="P54548"/>
    </source>
</evidence>
<evidence type="ECO:0000250" key="2">
    <source>
        <dbReference type="UniProtKB" id="Q9H777"/>
    </source>
</evidence>
<evidence type="ECO:0000303" key="3">
    <source>
    </source>
</evidence>
<evidence type="ECO:0000305" key="4"/>
<name>RNZ1_MOUSE</name>
<feature type="chain" id="PRO_0000155826" description="Zinc phosphodiesterase ELAC protein 1">
    <location>
        <begin position="1"/>
        <end position="362"/>
    </location>
</feature>
<feature type="active site" description="Proton acceptor" evidence="1">
    <location>
        <position position="66"/>
    </location>
</feature>
<feature type="binding site" evidence="2">
    <location>
        <position position="62"/>
    </location>
    <ligand>
        <name>Zn(2+)</name>
        <dbReference type="ChEBI" id="CHEBI:29105"/>
        <label>1</label>
        <note>catalytic</note>
    </ligand>
</feature>
<feature type="binding site" evidence="2">
    <location>
        <position position="64"/>
    </location>
    <ligand>
        <name>Zn(2+)</name>
        <dbReference type="ChEBI" id="CHEBI:29105"/>
        <label>1</label>
        <note>catalytic</note>
    </ligand>
</feature>
<feature type="binding site" evidence="2">
    <location>
        <position position="66"/>
    </location>
    <ligand>
        <name>Zn(2+)</name>
        <dbReference type="ChEBI" id="CHEBI:29105"/>
        <label>2</label>
        <note>catalytic</note>
    </ligand>
</feature>
<feature type="binding site" evidence="2">
    <location>
        <position position="67"/>
    </location>
    <ligand>
        <name>Zn(2+)</name>
        <dbReference type="ChEBI" id="CHEBI:29105"/>
        <label>2</label>
        <note>catalytic</note>
    </ligand>
</feature>
<feature type="binding site" evidence="2">
    <location>
        <position position="181"/>
    </location>
    <ligand>
        <name>Zn(2+)</name>
        <dbReference type="ChEBI" id="CHEBI:29105"/>
        <label>1</label>
        <note>catalytic</note>
    </ligand>
</feature>
<feature type="binding site" evidence="2">
    <location>
        <position position="252"/>
    </location>
    <ligand>
        <name>Zn(2+)</name>
        <dbReference type="ChEBI" id="CHEBI:29105"/>
        <label>1</label>
        <note>catalytic</note>
    </ligand>
</feature>
<feature type="binding site" evidence="2">
    <location>
        <position position="252"/>
    </location>
    <ligand>
        <name>Zn(2+)</name>
        <dbReference type="ChEBI" id="CHEBI:29105"/>
        <label>2</label>
        <note>catalytic</note>
    </ligand>
</feature>
<feature type="binding site" evidence="2">
    <location>
        <position position="312"/>
    </location>
    <ligand>
        <name>Zn(2+)</name>
        <dbReference type="ChEBI" id="CHEBI:29105"/>
        <label>2</label>
        <note>catalytic</note>
    </ligand>
</feature>
<feature type="splice variant" id="VSP_009167" description="In isoform 2." evidence="3">
    <location>
        <begin position="1"/>
        <end position="241"/>
    </location>
</feature>
<feature type="sequence conflict" description="In Ref. 1; AAG24919." evidence="4" ref="1">
    <original>T</original>
    <variation>P</variation>
    <location>
        <position position="77"/>
    </location>
</feature>
<feature type="sequence conflict" description="In Ref. 2; BAB31204." evidence="4" ref="2">
    <original>K</original>
    <variation>N</variation>
    <location>
        <position position="263"/>
    </location>
</feature>
<feature type="sequence conflict" description="In Ref. 1; AAG24919." evidence="4" ref="1">
    <original>T</original>
    <variation>G</variation>
    <location>
        <position position="276"/>
    </location>
</feature>
<feature type="sequence conflict" description="In Ref. 1; AAG24919." evidence="4" ref="1">
    <original>M</original>
    <variation>I</variation>
    <location>
        <position position="282"/>
    </location>
</feature>
<feature type="sequence conflict" description="In Ref. 1; AAG24919." evidence="4" ref="1">
    <original>E</original>
    <variation>D</variation>
    <location>
        <position position="287"/>
    </location>
</feature>
<feature type="sequence conflict" description="In Ref. 1; AAG24919." evidence="4" ref="1">
    <original>C</original>
    <variation>S</variation>
    <location>
        <position position="303"/>
    </location>
</feature>
<feature type="sequence conflict" description="In Ref. 1; AAG24919." evidence="4" ref="1">
    <original>S</original>
    <variation>I</variation>
    <location>
        <position position="314"/>
    </location>
</feature>
<feature type="sequence conflict" description="In Ref. 1; AAG24919." evidence="4" ref="1">
    <original>A</original>
    <variation>P</variation>
    <location>
        <position position="321"/>
    </location>
</feature>
<feature type="sequence conflict" description="In Ref. 1; AAG24919." evidence="4" ref="1">
    <original>A</original>
    <variation>P</variation>
    <location>
        <position position="340"/>
    </location>
</feature>
<gene>
    <name type="primary">Elac1</name>
</gene>
<organism>
    <name type="scientific">Mus musculus</name>
    <name type="common">Mouse</name>
    <dbReference type="NCBI Taxonomy" id="10090"/>
    <lineage>
        <taxon>Eukaryota</taxon>
        <taxon>Metazoa</taxon>
        <taxon>Chordata</taxon>
        <taxon>Craniata</taxon>
        <taxon>Vertebrata</taxon>
        <taxon>Euteleostomi</taxon>
        <taxon>Mammalia</taxon>
        <taxon>Eutheria</taxon>
        <taxon>Euarchontoglires</taxon>
        <taxon>Glires</taxon>
        <taxon>Rodentia</taxon>
        <taxon>Myomorpha</taxon>
        <taxon>Muroidea</taxon>
        <taxon>Muridae</taxon>
        <taxon>Murinae</taxon>
        <taxon>Mus</taxon>
        <taxon>Mus</taxon>
    </lineage>
</organism>
<accession>Q8VEB6</accession>
<accession>Q9CXB1</accession>
<accession>Q9ERF4</accession>
<reference key="1">
    <citation type="journal article" date="2001" name="Nat. Genet.">
        <title>A candidate prostate cancer susceptibility gene at chromosome 17p.</title>
        <authorList>
            <person name="Tavtigian S.V."/>
            <person name="Simard J."/>
            <person name="Teng D.H.F."/>
            <person name="Abtin V."/>
            <person name="Baumgard M."/>
            <person name="Beck A."/>
            <person name="Camp N.J."/>
            <person name="Carillo A.R."/>
            <person name="Chen Y."/>
            <person name="Dayananth P."/>
            <person name="Desrochers M."/>
            <person name="Dumont M."/>
            <person name="Farnham J.M."/>
            <person name="Frank D."/>
            <person name="Frye C."/>
            <person name="Ghaffari S."/>
            <person name="Gupte J.S."/>
            <person name="Hu R."/>
            <person name="Iliev D."/>
            <person name="Janecki T."/>
            <person name="Kort E.N."/>
            <person name="Laity K.E."/>
            <person name="Leavitt A."/>
            <person name="Leblanc G."/>
            <person name="McArthur-Morrison J."/>
            <person name="Pederson A."/>
            <person name="Penn B."/>
            <person name="Peterson K.T."/>
            <person name="Reid J.E."/>
            <person name="Richards S."/>
            <person name="Schroeder M."/>
            <person name="Smith R."/>
            <person name="Snyder S.C."/>
            <person name="Swedlund B."/>
            <person name="Swensen J."/>
            <person name="Thomas A."/>
            <person name="Tranchant M."/>
            <person name="Woodland A.-M."/>
            <person name="Labrie F."/>
            <person name="Skolnick M.H."/>
            <person name="Neuhausen S."/>
            <person name="Rommens J."/>
            <person name="Cannon-Albright L.A."/>
        </authorList>
    </citation>
    <scope>NUCLEOTIDE SEQUENCE [MRNA] (ISOFORM 1)</scope>
</reference>
<reference key="2">
    <citation type="journal article" date="2005" name="Science">
        <title>The transcriptional landscape of the mammalian genome.</title>
        <authorList>
            <person name="Carninci P."/>
            <person name="Kasukawa T."/>
            <person name="Katayama S."/>
            <person name="Gough J."/>
            <person name="Frith M.C."/>
            <person name="Maeda N."/>
            <person name="Oyama R."/>
            <person name="Ravasi T."/>
            <person name="Lenhard B."/>
            <person name="Wells C."/>
            <person name="Kodzius R."/>
            <person name="Shimokawa K."/>
            <person name="Bajic V.B."/>
            <person name="Brenner S.E."/>
            <person name="Batalov S."/>
            <person name="Forrest A.R."/>
            <person name="Zavolan M."/>
            <person name="Davis M.J."/>
            <person name="Wilming L.G."/>
            <person name="Aidinis V."/>
            <person name="Allen J.E."/>
            <person name="Ambesi-Impiombato A."/>
            <person name="Apweiler R."/>
            <person name="Aturaliya R.N."/>
            <person name="Bailey T.L."/>
            <person name="Bansal M."/>
            <person name="Baxter L."/>
            <person name="Beisel K.W."/>
            <person name="Bersano T."/>
            <person name="Bono H."/>
            <person name="Chalk A.M."/>
            <person name="Chiu K.P."/>
            <person name="Choudhary V."/>
            <person name="Christoffels A."/>
            <person name="Clutterbuck D.R."/>
            <person name="Crowe M.L."/>
            <person name="Dalla E."/>
            <person name="Dalrymple B.P."/>
            <person name="de Bono B."/>
            <person name="Della Gatta G."/>
            <person name="di Bernardo D."/>
            <person name="Down T."/>
            <person name="Engstrom P."/>
            <person name="Fagiolini M."/>
            <person name="Faulkner G."/>
            <person name="Fletcher C.F."/>
            <person name="Fukushima T."/>
            <person name="Furuno M."/>
            <person name="Futaki S."/>
            <person name="Gariboldi M."/>
            <person name="Georgii-Hemming P."/>
            <person name="Gingeras T.R."/>
            <person name="Gojobori T."/>
            <person name="Green R.E."/>
            <person name="Gustincich S."/>
            <person name="Harbers M."/>
            <person name="Hayashi Y."/>
            <person name="Hensch T.K."/>
            <person name="Hirokawa N."/>
            <person name="Hill D."/>
            <person name="Huminiecki L."/>
            <person name="Iacono M."/>
            <person name="Ikeo K."/>
            <person name="Iwama A."/>
            <person name="Ishikawa T."/>
            <person name="Jakt M."/>
            <person name="Kanapin A."/>
            <person name="Katoh M."/>
            <person name="Kawasawa Y."/>
            <person name="Kelso J."/>
            <person name="Kitamura H."/>
            <person name="Kitano H."/>
            <person name="Kollias G."/>
            <person name="Krishnan S.P."/>
            <person name="Kruger A."/>
            <person name="Kummerfeld S.K."/>
            <person name="Kurochkin I.V."/>
            <person name="Lareau L.F."/>
            <person name="Lazarevic D."/>
            <person name="Lipovich L."/>
            <person name="Liu J."/>
            <person name="Liuni S."/>
            <person name="McWilliam S."/>
            <person name="Madan Babu M."/>
            <person name="Madera M."/>
            <person name="Marchionni L."/>
            <person name="Matsuda H."/>
            <person name="Matsuzawa S."/>
            <person name="Miki H."/>
            <person name="Mignone F."/>
            <person name="Miyake S."/>
            <person name="Morris K."/>
            <person name="Mottagui-Tabar S."/>
            <person name="Mulder N."/>
            <person name="Nakano N."/>
            <person name="Nakauchi H."/>
            <person name="Ng P."/>
            <person name="Nilsson R."/>
            <person name="Nishiguchi S."/>
            <person name="Nishikawa S."/>
            <person name="Nori F."/>
            <person name="Ohara O."/>
            <person name="Okazaki Y."/>
            <person name="Orlando V."/>
            <person name="Pang K.C."/>
            <person name="Pavan W.J."/>
            <person name="Pavesi G."/>
            <person name="Pesole G."/>
            <person name="Petrovsky N."/>
            <person name="Piazza S."/>
            <person name="Reed J."/>
            <person name="Reid J.F."/>
            <person name="Ring B.Z."/>
            <person name="Ringwald M."/>
            <person name="Rost B."/>
            <person name="Ruan Y."/>
            <person name="Salzberg S.L."/>
            <person name="Sandelin A."/>
            <person name="Schneider C."/>
            <person name="Schoenbach C."/>
            <person name="Sekiguchi K."/>
            <person name="Semple C.A."/>
            <person name="Seno S."/>
            <person name="Sessa L."/>
            <person name="Sheng Y."/>
            <person name="Shibata Y."/>
            <person name="Shimada H."/>
            <person name="Shimada K."/>
            <person name="Silva D."/>
            <person name="Sinclair B."/>
            <person name="Sperling S."/>
            <person name="Stupka E."/>
            <person name="Sugiura K."/>
            <person name="Sultana R."/>
            <person name="Takenaka Y."/>
            <person name="Taki K."/>
            <person name="Tammoja K."/>
            <person name="Tan S.L."/>
            <person name="Tang S."/>
            <person name="Taylor M.S."/>
            <person name="Tegner J."/>
            <person name="Teichmann S.A."/>
            <person name="Ueda H.R."/>
            <person name="van Nimwegen E."/>
            <person name="Verardo R."/>
            <person name="Wei C.L."/>
            <person name="Yagi K."/>
            <person name="Yamanishi H."/>
            <person name="Zabarovsky E."/>
            <person name="Zhu S."/>
            <person name="Zimmer A."/>
            <person name="Hide W."/>
            <person name="Bult C."/>
            <person name="Grimmond S.M."/>
            <person name="Teasdale R.D."/>
            <person name="Liu E.T."/>
            <person name="Brusic V."/>
            <person name="Quackenbush J."/>
            <person name="Wahlestedt C."/>
            <person name="Mattick J.S."/>
            <person name="Hume D.A."/>
            <person name="Kai C."/>
            <person name="Sasaki D."/>
            <person name="Tomaru Y."/>
            <person name="Fukuda S."/>
            <person name="Kanamori-Katayama M."/>
            <person name="Suzuki M."/>
            <person name="Aoki J."/>
            <person name="Arakawa T."/>
            <person name="Iida J."/>
            <person name="Imamura K."/>
            <person name="Itoh M."/>
            <person name="Kato T."/>
            <person name="Kawaji H."/>
            <person name="Kawagashira N."/>
            <person name="Kawashima T."/>
            <person name="Kojima M."/>
            <person name="Kondo S."/>
            <person name="Konno H."/>
            <person name="Nakano K."/>
            <person name="Ninomiya N."/>
            <person name="Nishio T."/>
            <person name="Okada M."/>
            <person name="Plessy C."/>
            <person name="Shibata K."/>
            <person name="Shiraki T."/>
            <person name="Suzuki S."/>
            <person name="Tagami M."/>
            <person name="Waki K."/>
            <person name="Watahiki A."/>
            <person name="Okamura-Oho Y."/>
            <person name="Suzuki H."/>
            <person name="Kawai J."/>
            <person name="Hayashizaki Y."/>
        </authorList>
    </citation>
    <scope>NUCLEOTIDE SEQUENCE [LARGE SCALE MRNA] (ISOFORM 2)</scope>
    <source>
        <strain>C57BL/6J</strain>
        <tissue>Embryonic lung</tissue>
    </source>
</reference>
<reference key="3">
    <citation type="journal article" date="2004" name="Genome Res.">
        <title>The status, quality, and expansion of the NIH full-length cDNA project: the Mammalian Gene Collection (MGC).</title>
        <authorList>
            <consortium name="The MGC Project Team"/>
        </authorList>
    </citation>
    <scope>NUCLEOTIDE SEQUENCE [LARGE SCALE MRNA] (ISOFORM 1)</scope>
    <source>
        <tissue>Mammary tumor</tissue>
    </source>
</reference>
<sequence>MSMDVTFLGTGAAYPSPTRGASAVVLRCEGECWLFDCGEGTQTQLMKSQLKAGRITKIFITHLHGDHFFGLPGLLCTISLQSGSVVARQPIEIYGPVGLRDFIWRTMELSHTELVFPYVVHELVPTADQCPVEELREFAHMDETDSSPKGQGRTILLDAEENSYCLVDDEQFVVKAFRLFHRIPSFGFSVVEKKRAGKLNAQKLRDLGVPPGPAYGKLKNGISVVLDNGVTISPQDVLKKPMVGRKVCILGDCSGVVGDGGVKLCFEADLLIHEATLDDSQMDKAREHGHSTPQMAAAFAKLCRAKRLVLTHFSQRYKPTALAREGEADGIAELRKQAEAVLELQEVTLAEDFMVIGIPIKK</sequence>
<comment type="function">
    <text evidence="2">Zinc phosphodiesterase, which displays some tRNA 3'-processing endonuclease activity. Specifically involved in tRNA repair: acts downstream of the ribosome-associated quality control (RQC) pathway by removing a 2',3'-cyclic phosphate from tRNAs following cleavage by ANKZF1. tRNAs are then processed by TRNT1.</text>
</comment>
<comment type="catalytic activity">
    <reaction evidence="2">
        <text>Endonucleolytic cleavage of RNA, removing extra 3' nucleotides from tRNA precursor, generating 3' termini of tRNAs. A 3'-hydroxy group is left at the tRNA terminus and a 5'-phosphoryl group is left at the trailer molecule.</text>
        <dbReference type="EC" id="3.1.26.11"/>
    </reaction>
</comment>
<comment type="cofactor">
    <cofactor evidence="2">
        <name>Zn(2+)</name>
        <dbReference type="ChEBI" id="CHEBI:29105"/>
    </cofactor>
    <text evidence="2">Binds 2 Zn(2+) ions.</text>
</comment>
<comment type="subunit">
    <text evidence="2">Homodimer.</text>
</comment>
<comment type="subcellular location">
    <subcellularLocation>
        <location evidence="2">Cytoplasm</location>
        <location evidence="2">Cytosol</location>
    </subcellularLocation>
    <subcellularLocation>
        <location evidence="2">Nucleus</location>
    </subcellularLocation>
    <text evidence="2">Mainly cytosolic.</text>
</comment>
<comment type="alternative products">
    <event type="alternative splicing"/>
    <isoform>
        <id>Q8VEB6-1</id>
        <name>1</name>
        <sequence type="displayed"/>
    </isoform>
    <isoform>
        <id>Q8VEB6-2</id>
        <name>2</name>
        <sequence type="described" ref="VSP_009167"/>
    </isoform>
</comment>
<comment type="similarity">
    <text evidence="4">Belongs to the RNase Z family.</text>
</comment>
<proteinExistence type="evidence at transcript level"/>
<dbReference type="EC" id="3.1.26.11" evidence="2"/>
<dbReference type="EMBL" id="AF308697">
    <property type="protein sequence ID" value="AAG24919.1"/>
    <property type="molecule type" value="mRNA"/>
</dbReference>
<dbReference type="EMBL" id="AK018424">
    <property type="protein sequence ID" value="BAB31204.1"/>
    <property type="molecule type" value="mRNA"/>
</dbReference>
<dbReference type="EMBL" id="BC019371">
    <property type="status" value="NOT_ANNOTATED_CDS"/>
    <property type="molecule type" value="mRNA"/>
</dbReference>
<dbReference type="CCDS" id="CCDS37855.1">
    <molecule id="Q8VEB6-1"/>
</dbReference>
<dbReference type="RefSeq" id="NP_444485.2">
    <molecule id="Q8VEB6-1"/>
    <property type="nucleotide sequence ID" value="NM_053255.3"/>
</dbReference>
<dbReference type="SMR" id="Q8VEB6"/>
<dbReference type="FunCoup" id="Q8VEB6">
    <property type="interactions" value="2613"/>
</dbReference>
<dbReference type="STRING" id="10090.ENSMUSP00000041793"/>
<dbReference type="GlyGen" id="Q8VEB6">
    <property type="glycosylation" value="1 site"/>
</dbReference>
<dbReference type="PhosphoSitePlus" id="Q8VEB6"/>
<dbReference type="PaxDb" id="10090-ENSMUSP00000041793"/>
<dbReference type="ProteomicsDB" id="301629">
    <molecule id="Q8VEB6-1"/>
</dbReference>
<dbReference type="ProteomicsDB" id="301630">
    <molecule id="Q8VEB6-2"/>
</dbReference>
<dbReference type="Antibodypedia" id="22721">
    <property type="antibodies" value="241 antibodies from 20 providers"/>
</dbReference>
<dbReference type="Ensembl" id="ENSMUST00000041138.3">
    <molecule id="Q8VEB6-1"/>
    <property type="protein sequence ID" value="ENSMUSP00000041793.3"/>
    <property type="gene ID" value="ENSMUSG00000036941.3"/>
</dbReference>
<dbReference type="GeneID" id="114615"/>
<dbReference type="KEGG" id="mmu:114615"/>
<dbReference type="UCSC" id="uc008fow.1">
    <molecule id="Q8VEB6-1"/>
    <property type="organism name" value="mouse"/>
</dbReference>
<dbReference type="AGR" id="MGI:1890495"/>
<dbReference type="CTD" id="55520"/>
<dbReference type="MGI" id="MGI:1890495">
    <property type="gene designation" value="Elac1"/>
</dbReference>
<dbReference type="VEuPathDB" id="HostDB:ENSMUSG00000036941"/>
<dbReference type="eggNOG" id="KOG2121">
    <property type="taxonomic scope" value="Eukaryota"/>
</dbReference>
<dbReference type="GeneTree" id="ENSGT00730000111224"/>
<dbReference type="HOGENOM" id="CLU_031317_2_2_1"/>
<dbReference type="InParanoid" id="Q8VEB6"/>
<dbReference type="OMA" id="GTQRQMM"/>
<dbReference type="OrthoDB" id="527344at2759"/>
<dbReference type="PhylomeDB" id="Q8VEB6"/>
<dbReference type="TreeFam" id="TF324462"/>
<dbReference type="BioGRID-ORCS" id="114615">
    <property type="hits" value="0 hits in 76 CRISPR screens"/>
</dbReference>
<dbReference type="ChiTaRS" id="Elac1">
    <property type="organism name" value="mouse"/>
</dbReference>
<dbReference type="PRO" id="PR:Q8VEB6"/>
<dbReference type="Proteomes" id="UP000000589">
    <property type="component" value="Chromosome 18"/>
</dbReference>
<dbReference type="RNAct" id="Q8VEB6">
    <property type="molecule type" value="protein"/>
</dbReference>
<dbReference type="Bgee" id="ENSMUSG00000036941">
    <property type="expression patterns" value="Expressed in pigmented layer of retina and 216 other cell types or tissues"/>
</dbReference>
<dbReference type="GO" id="GO:0005829">
    <property type="term" value="C:cytosol"/>
    <property type="evidence" value="ECO:0000250"/>
    <property type="project" value="UniProtKB"/>
</dbReference>
<dbReference type="GO" id="GO:0005654">
    <property type="term" value="C:nucleoplasm"/>
    <property type="evidence" value="ECO:0007669"/>
    <property type="project" value="Ensembl"/>
</dbReference>
<dbReference type="GO" id="GO:0005634">
    <property type="term" value="C:nucleus"/>
    <property type="evidence" value="ECO:0000250"/>
    <property type="project" value="UniProtKB"/>
</dbReference>
<dbReference type="GO" id="GO:0042781">
    <property type="term" value="F:3'-tRNA processing endoribonuclease activity"/>
    <property type="evidence" value="ECO:0007669"/>
    <property type="project" value="UniProtKB-EC"/>
</dbReference>
<dbReference type="GO" id="GO:0046872">
    <property type="term" value="F:metal ion binding"/>
    <property type="evidence" value="ECO:0007669"/>
    <property type="project" value="UniProtKB-KW"/>
</dbReference>
<dbReference type="GO" id="GO:0004549">
    <property type="term" value="F:tRNA-specific ribonuclease activity"/>
    <property type="evidence" value="ECO:0000250"/>
    <property type="project" value="UniProtKB"/>
</dbReference>
<dbReference type="GO" id="GO:0072344">
    <property type="term" value="P:rescue of stalled ribosome"/>
    <property type="evidence" value="ECO:0007669"/>
    <property type="project" value="Ensembl"/>
</dbReference>
<dbReference type="GO" id="GO:0042780">
    <property type="term" value="P:tRNA 3'-end processing"/>
    <property type="evidence" value="ECO:0000250"/>
    <property type="project" value="UniProtKB"/>
</dbReference>
<dbReference type="CDD" id="cd07717">
    <property type="entry name" value="RNaseZ_ZiPD-like_MBL-fold"/>
    <property type="match status" value="1"/>
</dbReference>
<dbReference type="FunFam" id="3.60.15.10:FF:000069">
    <property type="entry name" value="ElaC ribonuclease Z 1"/>
    <property type="match status" value="1"/>
</dbReference>
<dbReference type="Gene3D" id="3.60.15.10">
    <property type="entry name" value="Ribonuclease Z/Hydroxyacylglutathione hydrolase-like"/>
    <property type="match status" value="1"/>
</dbReference>
<dbReference type="HAMAP" id="MF_01818">
    <property type="entry name" value="RNase_Z_BN"/>
    <property type="match status" value="1"/>
</dbReference>
<dbReference type="InterPro" id="IPR001279">
    <property type="entry name" value="Metallo-B-lactamas"/>
</dbReference>
<dbReference type="InterPro" id="IPR036866">
    <property type="entry name" value="RibonucZ/Hydroxyglut_hydro"/>
</dbReference>
<dbReference type="InterPro" id="IPR013471">
    <property type="entry name" value="RNase_Z/BN"/>
</dbReference>
<dbReference type="NCBIfam" id="NF000801">
    <property type="entry name" value="PRK00055.1-3"/>
    <property type="match status" value="1"/>
</dbReference>
<dbReference type="NCBIfam" id="TIGR02651">
    <property type="entry name" value="RNase_Z"/>
    <property type="match status" value="1"/>
</dbReference>
<dbReference type="PANTHER" id="PTHR46018">
    <property type="entry name" value="ZINC PHOSPHODIESTERASE ELAC PROTEIN 1"/>
    <property type="match status" value="1"/>
</dbReference>
<dbReference type="PANTHER" id="PTHR46018:SF2">
    <property type="entry name" value="ZINC PHOSPHODIESTERASE ELAC PROTEIN 1"/>
    <property type="match status" value="1"/>
</dbReference>
<dbReference type="Pfam" id="PF00753">
    <property type="entry name" value="Lactamase_B"/>
    <property type="match status" value="1"/>
</dbReference>
<dbReference type="SUPFAM" id="SSF56281">
    <property type="entry name" value="Metallo-hydrolase/oxidoreductase"/>
    <property type="match status" value="1"/>
</dbReference>
<keyword id="KW-0025">Alternative splicing</keyword>
<keyword id="KW-0963">Cytoplasm</keyword>
<keyword id="KW-0255">Endonuclease</keyword>
<keyword id="KW-0378">Hydrolase</keyword>
<keyword id="KW-0479">Metal-binding</keyword>
<keyword id="KW-0540">Nuclease</keyword>
<keyword id="KW-0539">Nucleus</keyword>
<keyword id="KW-1185">Reference proteome</keyword>
<keyword id="KW-0819">tRNA processing</keyword>
<keyword id="KW-0862">Zinc</keyword>